<gene>
    <name type="primary">CUTL1</name>
</gene>
<feature type="chain" id="PRO_0000071792" description="Protein CASP">
    <location>
        <begin position="1"/>
        <end position="678"/>
    </location>
</feature>
<feature type="topological domain" description="Cytoplasmic" evidence="3">
    <location>
        <begin position="1"/>
        <end position="619"/>
    </location>
</feature>
<feature type="transmembrane region" description="Helical; Anchor for type IV membrane protein" evidence="3">
    <location>
        <begin position="620"/>
        <end position="640"/>
    </location>
</feature>
<feature type="topological domain" description="Lumenal" evidence="3">
    <location>
        <begin position="641"/>
        <end position="678"/>
    </location>
</feature>
<feature type="coiled-coil region" evidence="3">
    <location>
        <begin position="67"/>
        <end position="450"/>
    </location>
</feature>
<feature type="coiled-coil region" evidence="3">
    <location>
        <begin position="502"/>
        <end position="556"/>
    </location>
</feature>
<feature type="modified residue" description="Phosphoserine" evidence="2">
    <location>
        <position position="586"/>
    </location>
</feature>
<comment type="function">
    <text evidence="1">May be involved in intra-Golgi retrograde transport.</text>
</comment>
<comment type="subunit">
    <text evidence="1">Homodimer; disulfide-linked. Interacts with GOLGA5 (By similarity).</text>
</comment>
<comment type="subcellular location">
    <subcellularLocation>
        <location evidence="1">Golgi apparatus membrane</location>
        <topology evidence="1">Single-pass type IV membrane protein</topology>
    </subcellularLocation>
</comment>
<comment type="similarity">
    <text evidence="4">Belongs to the CASP family.</text>
</comment>
<sequence length="678" mass="77489">MAANVGSMFQYWKRFDLQQLQRELDATATVLANRQDESEQSRKRLIEQSREFKKNTPEDLRKQVAPLLKSFQGEIDALSKRSKEAEAAFLNVYKRLIDVPDPVPALDLGQQLQLKVQRLHDIETENQKLRETLEEYNKEFAEVKNQEVTIKALKEKIREYEQTLKNQAETIALEKEQKLQNDFAEKERKLQETQMSTTSKLEEAEHKVQSLQTALEKTRTELFDLKTKYDEETTAKADEIEMIMTDLERANQRAEVAQREAETLREQLSSANHSLQLASQIQKAPDVEQAIEVLTRSSLEVELAAKEREIAQLVEDVQRLQASLTKLRENSASQISQLEQQLSAKNSTLKQLEEKLKGQADYEEVKKELNILKSMEFAPSEGAGTQDAAKPLEVLLLEKNRSLQSENAALRISNSDLSGRCAELQVRVTEAVATATEQRELIARLEQDLSIIQSIQRPDAEGAAEHRLEKIPEPIKEATALFYGPTAPASGALPEGQVDSLLSIISSQRERFRARNQELEAENRLAQHTLQALQSELDSLRADNIKLFEKIKFLQSYPGRGSGSDDTELRYSSQYEERLDPFSSFSKRERQRKYLSMSPWDKATLSMGRLVLSNKMARTIGFFYTLFLHCLVFLVLYKLAWSESMERDCATFCAKKFADHLHKFHENDNGAAAGDLWQ</sequence>
<dbReference type="EMBL" id="CR859648">
    <property type="protein sequence ID" value="CAH91809.1"/>
    <property type="molecule type" value="mRNA"/>
</dbReference>
<dbReference type="RefSeq" id="NP_001128945.1">
    <property type="nucleotide sequence ID" value="NM_001135473.1"/>
</dbReference>
<dbReference type="SMR" id="Q5R8V1"/>
<dbReference type="STRING" id="9601.ENSPPYP00000019564"/>
<dbReference type="GeneID" id="100171552"/>
<dbReference type="KEGG" id="pon:100171552"/>
<dbReference type="CTD" id="1523"/>
<dbReference type="eggNOG" id="KOG0963">
    <property type="taxonomic scope" value="Eukaryota"/>
</dbReference>
<dbReference type="InParanoid" id="Q5R8V1"/>
<dbReference type="OrthoDB" id="10257567at2759"/>
<dbReference type="Proteomes" id="UP000001595">
    <property type="component" value="Unplaced"/>
</dbReference>
<dbReference type="GO" id="GO:0000139">
    <property type="term" value="C:Golgi membrane"/>
    <property type="evidence" value="ECO:0007669"/>
    <property type="project" value="UniProtKB-SubCell"/>
</dbReference>
<dbReference type="GO" id="GO:0005634">
    <property type="term" value="C:nucleus"/>
    <property type="evidence" value="ECO:0007669"/>
    <property type="project" value="TreeGrafter"/>
</dbReference>
<dbReference type="GO" id="GO:0000981">
    <property type="term" value="F:DNA-binding transcription factor activity, RNA polymerase II-specific"/>
    <property type="evidence" value="ECO:0007669"/>
    <property type="project" value="TreeGrafter"/>
</dbReference>
<dbReference type="GO" id="GO:0000977">
    <property type="term" value="F:RNA polymerase II transcription regulatory region sequence-specific DNA binding"/>
    <property type="evidence" value="ECO:0007669"/>
    <property type="project" value="TreeGrafter"/>
</dbReference>
<dbReference type="GO" id="GO:0006891">
    <property type="term" value="P:intra-Golgi vesicle-mediated transport"/>
    <property type="evidence" value="ECO:0007669"/>
    <property type="project" value="InterPro"/>
</dbReference>
<dbReference type="InterPro" id="IPR012955">
    <property type="entry name" value="CASP_C"/>
</dbReference>
<dbReference type="PANTHER" id="PTHR14043">
    <property type="entry name" value="CCAAT DISPLACEMENT PROTEIN-RELATED"/>
    <property type="match status" value="1"/>
</dbReference>
<dbReference type="PANTHER" id="PTHR14043:SF15">
    <property type="entry name" value="PROTEIN CASP"/>
    <property type="match status" value="1"/>
</dbReference>
<dbReference type="Pfam" id="PF08172">
    <property type="entry name" value="CASP_C"/>
    <property type="match status" value="1"/>
</dbReference>
<dbReference type="Pfam" id="PF25398">
    <property type="entry name" value="CUX1_N"/>
    <property type="match status" value="1"/>
</dbReference>
<proteinExistence type="evidence at transcript level"/>
<evidence type="ECO:0000250" key="1"/>
<evidence type="ECO:0000250" key="2">
    <source>
        <dbReference type="UniProtKB" id="Q13948"/>
    </source>
</evidence>
<evidence type="ECO:0000255" key="3"/>
<evidence type="ECO:0000305" key="4"/>
<keyword id="KW-0175">Coiled coil</keyword>
<keyword id="KW-1015">Disulfide bond</keyword>
<keyword id="KW-0333">Golgi apparatus</keyword>
<keyword id="KW-0472">Membrane</keyword>
<keyword id="KW-0597">Phosphoprotein</keyword>
<keyword id="KW-1185">Reference proteome</keyword>
<keyword id="KW-0812">Transmembrane</keyword>
<keyword id="KW-1133">Transmembrane helix</keyword>
<keyword id="KW-0813">Transport</keyword>
<organism>
    <name type="scientific">Pongo abelii</name>
    <name type="common">Sumatran orangutan</name>
    <name type="synonym">Pongo pygmaeus abelii</name>
    <dbReference type="NCBI Taxonomy" id="9601"/>
    <lineage>
        <taxon>Eukaryota</taxon>
        <taxon>Metazoa</taxon>
        <taxon>Chordata</taxon>
        <taxon>Craniata</taxon>
        <taxon>Vertebrata</taxon>
        <taxon>Euteleostomi</taxon>
        <taxon>Mammalia</taxon>
        <taxon>Eutheria</taxon>
        <taxon>Euarchontoglires</taxon>
        <taxon>Primates</taxon>
        <taxon>Haplorrhini</taxon>
        <taxon>Catarrhini</taxon>
        <taxon>Hominidae</taxon>
        <taxon>Pongo</taxon>
    </lineage>
</organism>
<protein>
    <recommendedName>
        <fullName>Protein CASP</fullName>
    </recommendedName>
</protein>
<reference key="1">
    <citation type="submission" date="2004-11" db="EMBL/GenBank/DDBJ databases">
        <authorList>
            <consortium name="The German cDNA consortium"/>
        </authorList>
    </citation>
    <scope>NUCLEOTIDE SEQUENCE [LARGE SCALE MRNA]</scope>
    <source>
        <tissue>Kidney</tissue>
    </source>
</reference>
<accession>Q5R8V1</accession>
<name>CASP_PONAB</name>